<dbReference type="EMBL" id="AB169121">
    <property type="protein sequence ID" value="BAE01215.1"/>
    <property type="molecule type" value="mRNA"/>
</dbReference>
<dbReference type="RefSeq" id="NP_001272244.1">
    <property type="nucleotide sequence ID" value="NM_001285315.1"/>
</dbReference>
<dbReference type="SMR" id="Q4R6Q9"/>
<dbReference type="STRING" id="9541.ENSMFAP00000041168"/>
<dbReference type="eggNOG" id="ENOG502QV5R">
    <property type="taxonomic scope" value="Eukaryota"/>
</dbReference>
<dbReference type="Proteomes" id="UP000233100">
    <property type="component" value="Unplaced"/>
</dbReference>
<dbReference type="GO" id="GO:0005737">
    <property type="term" value="C:cytoplasm"/>
    <property type="evidence" value="ECO:0007669"/>
    <property type="project" value="UniProtKB-KW"/>
</dbReference>
<dbReference type="GO" id="GO:0002177">
    <property type="term" value="C:manchette"/>
    <property type="evidence" value="ECO:0000250"/>
    <property type="project" value="UniProtKB"/>
</dbReference>
<dbReference type="GO" id="GO:0005874">
    <property type="term" value="C:microtubule"/>
    <property type="evidence" value="ECO:0007669"/>
    <property type="project" value="UniProtKB-KW"/>
</dbReference>
<dbReference type="GO" id="GO:0036126">
    <property type="term" value="C:sperm flagellum"/>
    <property type="evidence" value="ECO:0000250"/>
    <property type="project" value="UniProtKB"/>
</dbReference>
<dbReference type="GO" id="GO:0008017">
    <property type="term" value="F:microtubule binding"/>
    <property type="evidence" value="ECO:0000250"/>
    <property type="project" value="UniProtKB"/>
</dbReference>
<dbReference type="InterPro" id="IPR026687">
    <property type="entry name" value="CCDC181"/>
</dbReference>
<dbReference type="PANTHER" id="PTHR14320">
    <property type="entry name" value="COILED-COIL DOMAIN-CONTAINING PROTEIN 181"/>
    <property type="match status" value="1"/>
</dbReference>
<dbReference type="PANTHER" id="PTHR14320:SF2">
    <property type="entry name" value="COILED-COIL DOMAIN-CONTAINING PROTEIN 181"/>
    <property type="match status" value="1"/>
</dbReference>
<accession>Q4R6Q9</accession>
<gene>
    <name evidence="1" type="primary">CCDC181</name>
    <name evidence="5" type="ORF">QtsA-17368</name>
</gene>
<comment type="function">
    <text evidence="2">Microtubule-binding protein that localizes to the microtubular manchette of elongating spermatids.</text>
</comment>
<comment type="subunit">
    <text evidence="2">Homodimer. Interacts with HOOK1. Interacts with HOOK2. Interacts with HOOK3.</text>
</comment>
<comment type="subcellular location">
    <subcellularLocation>
        <location evidence="2">Cytoplasm</location>
        <location evidence="2">Cytoskeleton</location>
    </subcellularLocation>
    <subcellularLocation>
        <location evidence="2">Cell projection</location>
        <location evidence="2">Cilium</location>
        <location evidence="2">Flagellum</location>
    </subcellularLocation>
    <text evidence="2">Localizes to the microtubular manchette of elongating spermatids. Localizes to the sperm flagella and to the basal half of motile cilia.</text>
</comment>
<comment type="similarity">
    <text evidence="6">Belongs to the CCDC181 family.</text>
</comment>
<proteinExistence type="evidence at transcript level"/>
<evidence type="ECO:0000250" key="1">
    <source>
        <dbReference type="UniProtKB" id="Q5TID7"/>
    </source>
</evidence>
<evidence type="ECO:0000250" key="2">
    <source>
        <dbReference type="UniProtKB" id="Q80ZU5"/>
    </source>
</evidence>
<evidence type="ECO:0000255" key="3"/>
<evidence type="ECO:0000256" key="4">
    <source>
        <dbReference type="SAM" id="MobiDB-lite"/>
    </source>
</evidence>
<evidence type="ECO:0000303" key="5">
    <source ref="1"/>
</evidence>
<evidence type="ECO:0000305" key="6"/>
<reference key="1">
    <citation type="submission" date="2005-06" db="EMBL/GenBank/DDBJ databases">
        <title>DNA sequences of macaque genes expressed in brain or testis and its evolutionary implications.</title>
        <authorList>
            <consortium name="International consortium for macaque cDNA sequencing and analysis"/>
        </authorList>
    </citation>
    <scope>NUCLEOTIDE SEQUENCE [LARGE SCALE MRNA]</scope>
    <source>
        <tissue>Testis</tissue>
    </source>
</reference>
<organism>
    <name type="scientific">Macaca fascicularis</name>
    <name type="common">Crab-eating macaque</name>
    <name type="synonym">Cynomolgus monkey</name>
    <dbReference type="NCBI Taxonomy" id="9541"/>
    <lineage>
        <taxon>Eukaryota</taxon>
        <taxon>Metazoa</taxon>
        <taxon>Chordata</taxon>
        <taxon>Craniata</taxon>
        <taxon>Vertebrata</taxon>
        <taxon>Euteleostomi</taxon>
        <taxon>Mammalia</taxon>
        <taxon>Eutheria</taxon>
        <taxon>Euarchontoglires</taxon>
        <taxon>Primates</taxon>
        <taxon>Haplorrhini</taxon>
        <taxon>Catarrhini</taxon>
        <taxon>Cercopithecidae</taxon>
        <taxon>Cercopithecinae</taxon>
        <taxon>Macaca</taxon>
    </lineage>
</organism>
<keyword id="KW-0966">Cell projection</keyword>
<keyword id="KW-0969">Cilium</keyword>
<keyword id="KW-0175">Coiled coil</keyword>
<keyword id="KW-0963">Cytoplasm</keyword>
<keyword id="KW-0206">Cytoskeleton</keyword>
<keyword id="KW-0282">Flagellum</keyword>
<keyword id="KW-0493">Microtubule</keyword>
<keyword id="KW-1185">Reference proteome</keyword>
<protein>
    <recommendedName>
        <fullName evidence="1">Coiled-coil domain-containing protein 181</fullName>
    </recommendedName>
</protein>
<feature type="chain" id="PRO_0000279466" description="Coiled-coil domain-containing protein 181">
    <location>
        <begin position="1"/>
        <end position="509"/>
    </location>
</feature>
<feature type="region of interest" description="Disordered" evidence="4">
    <location>
        <begin position="60"/>
        <end position="121"/>
    </location>
</feature>
<feature type="region of interest" description="Disordered" evidence="4">
    <location>
        <begin position="285"/>
        <end position="367"/>
    </location>
</feature>
<feature type="coiled-coil region" evidence="3">
    <location>
        <begin position="335"/>
        <end position="375"/>
    </location>
</feature>
<feature type="compositionally biased region" description="Basic and acidic residues" evidence="4">
    <location>
        <begin position="60"/>
        <end position="82"/>
    </location>
</feature>
<feature type="compositionally biased region" description="Polar residues" evidence="4">
    <location>
        <begin position="320"/>
        <end position="334"/>
    </location>
</feature>
<feature type="compositionally biased region" description="Basic and acidic residues" evidence="4">
    <location>
        <begin position="338"/>
        <end position="367"/>
    </location>
</feature>
<name>CC181_MACFA</name>
<sequence length="509" mass="60026">MNEIKDTDSKKSEEYEDDFEKDLEWLINENEKSDASIIEMACEKEENINQDLKENETVIEHTKQHSDPDKSLQDDVSPRRNDIISVPGIQPLDPISDSDSENSFQESKLESQKDLEEEEDEEVRRYIMEKIVQANKLLQNQEPVNDKRERKLKFKDKLADLEVPPLEDTNTSKNYFENERNMFGKLSQLCISNDFGQENVLLSLTNASCEENKDRTILVERDGKFELLNLQDIASQGFLPPINNANSTENDPQHLLLRSSNSSVSGTKKEDSAAKIHAVTHSSTGEPLVYIPQPPLNRKTCPSSAANSDRSKGKGKYNHRTQSARISPVTSTYCLSPRQKELQKQLEQKREKLKREEEQRKIEEEKEKKRENDIVFKAWLQKKREQVLEMRRIQRAKEIEDMNSRQENRDPQQAFRLWLKKKHEEQMKERKTEELRKQEECLFFLKGTEGRERAFKQWLRRKRIEKIAEQQAVRERTRQLRLEAKHSKQLQHHLYMSEAKPFRFTDHYN</sequence>